<feature type="peptide" id="PRO_0000043453" description="Leucokinin-8">
    <location>
        <begin position="1"/>
        <end position="8"/>
    </location>
</feature>
<feature type="modified residue" description="Glycine amide" evidence="1">
    <location>
        <position position="8"/>
    </location>
</feature>
<name>LCK8_RHYMA</name>
<dbReference type="PIR" id="JS0318">
    <property type="entry name" value="JS0318"/>
</dbReference>
<dbReference type="GO" id="GO:0005576">
    <property type="term" value="C:extracellular region"/>
    <property type="evidence" value="ECO:0007669"/>
    <property type="project" value="UniProtKB-SubCell"/>
</dbReference>
<dbReference type="GO" id="GO:0007218">
    <property type="term" value="P:neuropeptide signaling pathway"/>
    <property type="evidence" value="ECO:0007669"/>
    <property type="project" value="UniProtKB-KW"/>
</dbReference>
<organism>
    <name type="scientific">Rhyparobia maderae</name>
    <name type="common">Madeira cockroach</name>
    <name type="synonym">Leucophaea maderae</name>
    <dbReference type="NCBI Taxonomy" id="36963"/>
    <lineage>
        <taxon>Eukaryota</taxon>
        <taxon>Metazoa</taxon>
        <taxon>Ecdysozoa</taxon>
        <taxon>Arthropoda</taxon>
        <taxon>Hexapoda</taxon>
        <taxon>Insecta</taxon>
        <taxon>Pterygota</taxon>
        <taxon>Neoptera</taxon>
        <taxon>Polyneoptera</taxon>
        <taxon>Dictyoptera</taxon>
        <taxon>Blattodea</taxon>
        <taxon>Blaberoidea</taxon>
        <taxon>Blaberidae</taxon>
        <taxon>Oxyhaloinae</taxon>
        <taxon>Rhyparobia</taxon>
    </lineage>
</organism>
<evidence type="ECO:0000269" key="1">
    <source ref="1"/>
</evidence>
<proteinExistence type="evidence at protein level"/>
<sequence length="8" mass="902">GADFYSWG</sequence>
<keyword id="KW-0027">Amidation</keyword>
<keyword id="KW-0903">Direct protein sequencing</keyword>
<keyword id="KW-0527">Neuropeptide</keyword>
<keyword id="KW-0964">Secreted</keyword>
<reference key="1">
    <citation type="journal article" date="1987" name="Comp. Biochem. Physiol.">
        <title>Isolation, primary structure and synthesis of leucokinins VII and VIII: the final members of this new family of cephalomyotropic peptides isolated from head extracts of Leucophaea maderae.</title>
        <authorList>
            <person name="Holman G.M."/>
            <person name="Cook B.J."/>
            <person name="Nachman R.J."/>
        </authorList>
    </citation>
    <scope>PROTEIN SEQUENCE</scope>
    <scope>AMIDATION AT GLY-8</scope>
    <source>
        <tissue>Head</tissue>
    </source>
</reference>
<comment type="function">
    <text>This cephalomyotropic peptide stimulates contractile activity of cockroach protodeum (hindgut).</text>
</comment>
<comment type="subcellular location">
    <subcellularLocation>
        <location>Secreted</location>
    </subcellularLocation>
</comment>
<protein>
    <recommendedName>
        <fullName>Leucokinin-8</fullName>
    </recommendedName>
    <alternativeName>
        <fullName>Leucokinin VIII</fullName>
        <shortName>L-VIII</shortName>
    </alternativeName>
</protein>
<accession>P19990</accession>